<dbReference type="EC" id="6.3.5.-" evidence="1"/>
<dbReference type="EMBL" id="CP000301">
    <property type="protein sequence ID" value="ABD87823.1"/>
    <property type="molecule type" value="Genomic_DNA"/>
</dbReference>
<dbReference type="SMR" id="Q215W3"/>
<dbReference type="STRING" id="316056.RPC_2269"/>
<dbReference type="KEGG" id="rpc:RPC_2269"/>
<dbReference type="eggNOG" id="COG0064">
    <property type="taxonomic scope" value="Bacteria"/>
</dbReference>
<dbReference type="HOGENOM" id="CLU_019240_0_0_5"/>
<dbReference type="OrthoDB" id="9804078at2"/>
<dbReference type="GO" id="GO:0050566">
    <property type="term" value="F:asparaginyl-tRNA synthase (glutamine-hydrolyzing) activity"/>
    <property type="evidence" value="ECO:0007669"/>
    <property type="project" value="RHEA"/>
</dbReference>
<dbReference type="GO" id="GO:0005524">
    <property type="term" value="F:ATP binding"/>
    <property type="evidence" value="ECO:0007669"/>
    <property type="project" value="UniProtKB-KW"/>
</dbReference>
<dbReference type="GO" id="GO:0050567">
    <property type="term" value="F:glutaminyl-tRNA synthase (glutamine-hydrolyzing) activity"/>
    <property type="evidence" value="ECO:0007669"/>
    <property type="project" value="UniProtKB-UniRule"/>
</dbReference>
<dbReference type="GO" id="GO:0070681">
    <property type="term" value="P:glutaminyl-tRNAGln biosynthesis via transamidation"/>
    <property type="evidence" value="ECO:0007669"/>
    <property type="project" value="TreeGrafter"/>
</dbReference>
<dbReference type="GO" id="GO:0006412">
    <property type="term" value="P:translation"/>
    <property type="evidence" value="ECO:0007669"/>
    <property type="project" value="UniProtKB-UniRule"/>
</dbReference>
<dbReference type="FunFam" id="1.10.10.410:FF:000001">
    <property type="entry name" value="Aspartyl/glutamyl-tRNA(Asn/Gln) amidotransferase subunit B"/>
    <property type="match status" value="1"/>
</dbReference>
<dbReference type="FunFam" id="1.10.150.380:FF:000001">
    <property type="entry name" value="Aspartyl/glutamyl-tRNA(Asn/Gln) amidotransferase subunit B"/>
    <property type="match status" value="1"/>
</dbReference>
<dbReference type="Gene3D" id="1.10.10.410">
    <property type="match status" value="1"/>
</dbReference>
<dbReference type="Gene3D" id="1.10.150.380">
    <property type="entry name" value="GatB domain, N-terminal subdomain"/>
    <property type="match status" value="1"/>
</dbReference>
<dbReference type="HAMAP" id="MF_00121">
    <property type="entry name" value="GatB"/>
    <property type="match status" value="1"/>
</dbReference>
<dbReference type="InterPro" id="IPR017959">
    <property type="entry name" value="Asn/Gln-tRNA_amidoTrfase_suB/E"/>
</dbReference>
<dbReference type="InterPro" id="IPR006075">
    <property type="entry name" value="Asn/Gln-tRNA_Trfase_suB/E_cat"/>
</dbReference>
<dbReference type="InterPro" id="IPR018027">
    <property type="entry name" value="Asn/Gln_amidotransferase"/>
</dbReference>
<dbReference type="InterPro" id="IPR003789">
    <property type="entry name" value="Asn/Gln_tRNA_amidoTrase-B-like"/>
</dbReference>
<dbReference type="InterPro" id="IPR004413">
    <property type="entry name" value="GatB"/>
</dbReference>
<dbReference type="InterPro" id="IPR042114">
    <property type="entry name" value="GatB_C_1"/>
</dbReference>
<dbReference type="InterPro" id="IPR023168">
    <property type="entry name" value="GatB_Yqey_C_2"/>
</dbReference>
<dbReference type="InterPro" id="IPR017958">
    <property type="entry name" value="Gln-tRNA_amidoTrfase_suB_CS"/>
</dbReference>
<dbReference type="InterPro" id="IPR014746">
    <property type="entry name" value="Gln_synth/guanido_kin_cat_dom"/>
</dbReference>
<dbReference type="NCBIfam" id="TIGR00133">
    <property type="entry name" value="gatB"/>
    <property type="match status" value="1"/>
</dbReference>
<dbReference type="NCBIfam" id="NF004012">
    <property type="entry name" value="PRK05477.1-2"/>
    <property type="match status" value="1"/>
</dbReference>
<dbReference type="NCBIfam" id="NF004014">
    <property type="entry name" value="PRK05477.1-4"/>
    <property type="match status" value="1"/>
</dbReference>
<dbReference type="NCBIfam" id="NF004015">
    <property type="entry name" value="PRK05477.1-5"/>
    <property type="match status" value="1"/>
</dbReference>
<dbReference type="PANTHER" id="PTHR11659">
    <property type="entry name" value="GLUTAMYL-TRNA GLN AMIDOTRANSFERASE SUBUNIT B MITOCHONDRIAL AND PROKARYOTIC PET112-RELATED"/>
    <property type="match status" value="1"/>
</dbReference>
<dbReference type="PANTHER" id="PTHR11659:SF0">
    <property type="entry name" value="GLUTAMYL-TRNA(GLN) AMIDOTRANSFERASE SUBUNIT B, MITOCHONDRIAL"/>
    <property type="match status" value="1"/>
</dbReference>
<dbReference type="Pfam" id="PF02934">
    <property type="entry name" value="GatB_N"/>
    <property type="match status" value="1"/>
</dbReference>
<dbReference type="Pfam" id="PF02637">
    <property type="entry name" value="GatB_Yqey"/>
    <property type="match status" value="1"/>
</dbReference>
<dbReference type="SMART" id="SM00845">
    <property type="entry name" value="GatB_Yqey"/>
    <property type="match status" value="1"/>
</dbReference>
<dbReference type="SUPFAM" id="SSF89095">
    <property type="entry name" value="GatB/YqeY motif"/>
    <property type="match status" value="1"/>
</dbReference>
<dbReference type="SUPFAM" id="SSF55931">
    <property type="entry name" value="Glutamine synthetase/guanido kinase"/>
    <property type="match status" value="1"/>
</dbReference>
<dbReference type="PROSITE" id="PS01234">
    <property type="entry name" value="GATB"/>
    <property type="match status" value="1"/>
</dbReference>
<gene>
    <name evidence="1" type="primary">gatB</name>
    <name type="ordered locus">RPC_2269</name>
</gene>
<reference key="1">
    <citation type="submission" date="2006-03" db="EMBL/GenBank/DDBJ databases">
        <title>Complete sequence of Rhodopseudomonas palustris BisB18.</title>
        <authorList>
            <consortium name="US DOE Joint Genome Institute"/>
            <person name="Copeland A."/>
            <person name="Lucas S."/>
            <person name="Lapidus A."/>
            <person name="Barry K."/>
            <person name="Detter J.C."/>
            <person name="Glavina del Rio T."/>
            <person name="Hammon N."/>
            <person name="Israni S."/>
            <person name="Dalin E."/>
            <person name="Tice H."/>
            <person name="Pitluck S."/>
            <person name="Chain P."/>
            <person name="Malfatti S."/>
            <person name="Shin M."/>
            <person name="Vergez L."/>
            <person name="Schmutz J."/>
            <person name="Larimer F."/>
            <person name="Land M."/>
            <person name="Hauser L."/>
            <person name="Pelletier D.A."/>
            <person name="Kyrpides N."/>
            <person name="Anderson I."/>
            <person name="Oda Y."/>
            <person name="Harwood C.S."/>
            <person name="Richardson P."/>
        </authorList>
    </citation>
    <scope>NUCLEOTIDE SEQUENCE [LARGE SCALE GENOMIC DNA]</scope>
    <source>
        <strain>BisB18</strain>
    </source>
</reference>
<comment type="function">
    <text evidence="1">Allows the formation of correctly charged Asn-tRNA(Asn) or Gln-tRNA(Gln) through the transamidation of misacylated Asp-tRNA(Asn) or Glu-tRNA(Gln) in organisms which lack either or both of asparaginyl-tRNA or glutaminyl-tRNA synthetases. The reaction takes place in the presence of glutamine and ATP through an activated phospho-Asp-tRNA(Asn) or phospho-Glu-tRNA(Gln).</text>
</comment>
<comment type="catalytic activity">
    <reaction evidence="1">
        <text>L-glutamyl-tRNA(Gln) + L-glutamine + ATP + H2O = L-glutaminyl-tRNA(Gln) + L-glutamate + ADP + phosphate + H(+)</text>
        <dbReference type="Rhea" id="RHEA:17521"/>
        <dbReference type="Rhea" id="RHEA-COMP:9681"/>
        <dbReference type="Rhea" id="RHEA-COMP:9684"/>
        <dbReference type="ChEBI" id="CHEBI:15377"/>
        <dbReference type="ChEBI" id="CHEBI:15378"/>
        <dbReference type="ChEBI" id="CHEBI:29985"/>
        <dbReference type="ChEBI" id="CHEBI:30616"/>
        <dbReference type="ChEBI" id="CHEBI:43474"/>
        <dbReference type="ChEBI" id="CHEBI:58359"/>
        <dbReference type="ChEBI" id="CHEBI:78520"/>
        <dbReference type="ChEBI" id="CHEBI:78521"/>
        <dbReference type="ChEBI" id="CHEBI:456216"/>
    </reaction>
</comment>
<comment type="catalytic activity">
    <reaction evidence="1">
        <text>L-aspartyl-tRNA(Asn) + L-glutamine + ATP + H2O = L-asparaginyl-tRNA(Asn) + L-glutamate + ADP + phosphate + 2 H(+)</text>
        <dbReference type="Rhea" id="RHEA:14513"/>
        <dbReference type="Rhea" id="RHEA-COMP:9674"/>
        <dbReference type="Rhea" id="RHEA-COMP:9677"/>
        <dbReference type="ChEBI" id="CHEBI:15377"/>
        <dbReference type="ChEBI" id="CHEBI:15378"/>
        <dbReference type="ChEBI" id="CHEBI:29985"/>
        <dbReference type="ChEBI" id="CHEBI:30616"/>
        <dbReference type="ChEBI" id="CHEBI:43474"/>
        <dbReference type="ChEBI" id="CHEBI:58359"/>
        <dbReference type="ChEBI" id="CHEBI:78515"/>
        <dbReference type="ChEBI" id="CHEBI:78516"/>
        <dbReference type="ChEBI" id="CHEBI:456216"/>
    </reaction>
</comment>
<comment type="subunit">
    <text evidence="1">Heterotrimer of A, B and C subunits.</text>
</comment>
<comment type="similarity">
    <text evidence="1">Belongs to the GatB/GatE family. GatB subfamily.</text>
</comment>
<name>GATB_RHOPB</name>
<accession>Q215W3</accession>
<proteinExistence type="inferred from homology"/>
<evidence type="ECO:0000255" key="1">
    <source>
        <dbReference type="HAMAP-Rule" id="MF_00121"/>
    </source>
</evidence>
<organism>
    <name type="scientific">Rhodopseudomonas palustris (strain BisB18)</name>
    <dbReference type="NCBI Taxonomy" id="316056"/>
    <lineage>
        <taxon>Bacteria</taxon>
        <taxon>Pseudomonadati</taxon>
        <taxon>Pseudomonadota</taxon>
        <taxon>Alphaproteobacteria</taxon>
        <taxon>Hyphomicrobiales</taxon>
        <taxon>Nitrobacteraceae</taxon>
        <taxon>Rhodopseudomonas</taxon>
    </lineage>
</organism>
<feature type="chain" id="PRO_0000241267" description="Aspartyl/glutamyl-tRNA(Asn/Gln) amidotransferase subunit B">
    <location>
        <begin position="1"/>
        <end position="494"/>
    </location>
</feature>
<sequence length="494" mass="53378">MNAPVKPSKLIKGATGDWEIVIGLEVHAQVSSKSKLFSGASTEFGGDPNAHVSLVDAAMPGMLPVINEECVKQAVRSGLGLNAQINLRSTFDRKNYFYPDLPQGYQISQFKSPIVGEGEVQVDVADGDGVTVGIERLHLEQDAGKLLHDQNPTMSLVDLNRSGVALMEIVSKPDIRSADQAKAYVTKLRTILRYLGTCDGDMEKGSLRADVNVSVRKPGAPLGTRCEIKNVNSIRFIGQAIDYEARRQIGILEDGGSIDQETRLFDAGKGETRSMRSKEEAHDYRYFPDPDLLPLQFDQAFVDALKAELPELPDAKKARFIADFGLSADDAGVLVSERESAEFYETVLSKLADAGRDGKLAANWVINELFGRLNKEGVAIEASPVSTAQLAAIVDLIGEATISGKIAKELFEIVWQEGGDPRATVEARGMRQVTDTGAIEKVVDDIVNANPDKVAQAQAKPALIGWFVGQVMKSSGGKANPQTVNDLLKSKLGL</sequence>
<protein>
    <recommendedName>
        <fullName evidence="1">Aspartyl/glutamyl-tRNA(Asn/Gln) amidotransferase subunit B</fullName>
        <shortName evidence="1">Asp/Glu-ADT subunit B</shortName>
        <ecNumber evidence="1">6.3.5.-</ecNumber>
    </recommendedName>
</protein>
<keyword id="KW-0067">ATP-binding</keyword>
<keyword id="KW-0436">Ligase</keyword>
<keyword id="KW-0547">Nucleotide-binding</keyword>
<keyword id="KW-0648">Protein biosynthesis</keyword>